<organism>
    <name type="scientific">Lachnoclostridium phytofermentans (strain ATCC 700394 / DSM 18823 / ISDg)</name>
    <name type="common">Clostridium phytofermentans</name>
    <dbReference type="NCBI Taxonomy" id="357809"/>
    <lineage>
        <taxon>Bacteria</taxon>
        <taxon>Bacillati</taxon>
        <taxon>Bacillota</taxon>
        <taxon>Clostridia</taxon>
        <taxon>Lachnospirales</taxon>
        <taxon>Lachnospiraceae</taxon>
    </lineage>
</organism>
<accession>A9KMF8</accession>
<proteinExistence type="inferred from homology"/>
<feature type="chain" id="PRO_1000086976" description="Large ribosomal subunit protein bL21">
    <location>
        <begin position="1"/>
        <end position="102"/>
    </location>
</feature>
<gene>
    <name evidence="1" type="primary">rplU</name>
    <name type="ordered locus">Cphy_2551</name>
</gene>
<comment type="function">
    <text evidence="1">This protein binds to 23S rRNA in the presence of protein L20.</text>
</comment>
<comment type="subunit">
    <text evidence="1">Part of the 50S ribosomal subunit. Contacts protein L20.</text>
</comment>
<comment type="similarity">
    <text evidence="1">Belongs to the bacterial ribosomal protein bL21 family.</text>
</comment>
<keyword id="KW-1185">Reference proteome</keyword>
<keyword id="KW-0687">Ribonucleoprotein</keyword>
<keyword id="KW-0689">Ribosomal protein</keyword>
<keyword id="KW-0694">RNA-binding</keyword>
<keyword id="KW-0699">rRNA-binding</keyword>
<reference key="1">
    <citation type="submission" date="2007-11" db="EMBL/GenBank/DDBJ databases">
        <title>Complete genome sequence of Clostridium phytofermentans ISDg.</title>
        <authorList>
            <person name="Leschine S.B."/>
            <person name="Warnick T.A."/>
            <person name="Blanchard J.L."/>
            <person name="Schnell D.J."/>
            <person name="Petit E.L."/>
            <person name="LaTouf W.G."/>
            <person name="Copeland A."/>
            <person name="Lucas S."/>
            <person name="Lapidus A."/>
            <person name="Barry K."/>
            <person name="Glavina del Rio T."/>
            <person name="Dalin E."/>
            <person name="Tice H."/>
            <person name="Pitluck S."/>
            <person name="Kiss H."/>
            <person name="Brettin T."/>
            <person name="Bruce D."/>
            <person name="Detter J.C."/>
            <person name="Han C."/>
            <person name="Kuske C."/>
            <person name="Schmutz J."/>
            <person name="Larimer F."/>
            <person name="Land M."/>
            <person name="Hauser L."/>
            <person name="Kyrpides N."/>
            <person name="Kim E.A."/>
            <person name="Richardson P."/>
        </authorList>
    </citation>
    <scope>NUCLEOTIDE SEQUENCE [LARGE SCALE GENOMIC DNA]</scope>
    <source>
        <strain>ATCC 700394 / DSM 18823 / ISDg</strain>
    </source>
</reference>
<dbReference type="EMBL" id="CP000885">
    <property type="protein sequence ID" value="ABX42912.1"/>
    <property type="molecule type" value="Genomic_DNA"/>
</dbReference>
<dbReference type="RefSeq" id="WP_012200565.1">
    <property type="nucleotide sequence ID" value="NC_010001.1"/>
</dbReference>
<dbReference type="SMR" id="A9KMF8"/>
<dbReference type="STRING" id="357809.Cphy_2551"/>
<dbReference type="KEGG" id="cpy:Cphy_2551"/>
<dbReference type="eggNOG" id="COG0261">
    <property type="taxonomic scope" value="Bacteria"/>
</dbReference>
<dbReference type="HOGENOM" id="CLU_061463_3_2_9"/>
<dbReference type="OrthoDB" id="9813334at2"/>
<dbReference type="Proteomes" id="UP000000370">
    <property type="component" value="Chromosome"/>
</dbReference>
<dbReference type="GO" id="GO:0005737">
    <property type="term" value="C:cytoplasm"/>
    <property type="evidence" value="ECO:0007669"/>
    <property type="project" value="UniProtKB-ARBA"/>
</dbReference>
<dbReference type="GO" id="GO:1990904">
    <property type="term" value="C:ribonucleoprotein complex"/>
    <property type="evidence" value="ECO:0007669"/>
    <property type="project" value="UniProtKB-KW"/>
</dbReference>
<dbReference type="GO" id="GO:0005840">
    <property type="term" value="C:ribosome"/>
    <property type="evidence" value="ECO:0007669"/>
    <property type="project" value="UniProtKB-KW"/>
</dbReference>
<dbReference type="GO" id="GO:0019843">
    <property type="term" value="F:rRNA binding"/>
    <property type="evidence" value="ECO:0007669"/>
    <property type="project" value="UniProtKB-UniRule"/>
</dbReference>
<dbReference type="GO" id="GO:0003735">
    <property type="term" value="F:structural constituent of ribosome"/>
    <property type="evidence" value="ECO:0007669"/>
    <property type="project" value="InterPro"/>
</dbReference>
<dbReference type="GO" id="GO:0006412">
    <property type="term" value="P:translation"/>
    <property type="evidence" value="ECO:0007669"/>
    <property type="project" value="UniProtKB-UniRule"/>
</dbReference>
<dbReference type="HAMAP" id="MF_01363">
    <property type="entry name" value="Ribosomal_bL21"/>
    <property type="match status" value="1"/>
</dbReference>
<dbReference type="InterPro" id="IPR028909">
    <property type="entry name" value="bL21-like"/>
</dbReference>
<dbReference type="InterPro" id="IPR036164">
    <property type="entry name" value="bL21-like_sf"/>
</dbReference>
<dbReference type="InterPro" id="IPR001787">
    <property type="entry name" value="Ribosomal_bL21"/>
</dbReference>
<dbReference type="NCBIfam" id="TIGR00061">
    <property type="entry name" value="L21"/>
    <property type="match status" value="1"/>
</dbReference>
<dbReference type="PANTHER" id="PTHR21349">
    <property type="entry name" value="50S RIBOSOMAL PROTEIN L21"/>
    <property type="match status" value="1"/>
</dbReference>
<dbReference type="PANTHER" id="PTHR21349:SF0">
    <property type="entry name" value="LARGE RIBOSOMAL SUBUNIT PROTEIN BL21M"/>
    <property type="match status" value="1"/>
</dbReference>
<dbReference type="Pfam" id="PF00829">
    <property type="entry name" value="Ribosomal_L21p"/>
    <property type="match status" value="1"/>
</dbReference>
<dbReference type="SUPFAM" id="SSF141091">
    <property type="entry name" value="L21p-like"/>
    <property type="match status" value="1"/>
</dbReference>
<sequence>MYAIIATGGKQYKVAEGDIIKVEKLGVEAGATVSFDQVLVLNNGQVVVGNPTVAGASVSATVVEEGKNKKVIVYRYKRKSGYHKKNGHRQSYTKVKIDKINA</sequence>
<name>RL21_LACP7</name>
<protein>
    <recommendedName>
        <fullName evidence="1">Large ribosomal subunit protein bL21</fullName>
    </recommendedName>
    <alternativeName>
        <fullName evidence="2">50S ribosomal protein L21</fullName>
    </alternativeName>
</protein>
<evidence type="ECO:0000255" key="1">
    <source>
        <dbReference type="HAMAP-Rule" id="MF_01363"/>
    </source>
</evidence>
<evidence type="ECO:0000305" key="2"/>